<keyword id="KW-0066">ATP synthesis</keyword>
<keyword id="KW-0067">ATP-binding</keyword>
<keyword id="KW-0997">Cell inner membrane</keyword>
<keyword id="KW-1003">Cell membrane</keyword>
<keyword id="KW-0139">CF(1)</keyword>
<keyword id="KW-0375">Hydrogen ion transport</keyword>
<keyword id="KW-0406">Ion transport</keyword>
<keyword id="KW-0472">Membrane</keyword>
<keyword id="KW-0547">Nucleotide-binding</keyword>
<keyword id="KW-1278">Translocase</keyword>
<keyword id="KW-0813">Transport</keyword>
<protein>
    <recommendedName>
        <fullName evidence="1">ATP synthase subunit beta</fullName>
        <ecNumber evidence="1">7.1.2.2</ecNumber>
    </recommendedName>
    <alternativeName>
        <fullName evidence="1">ATP synthase F1 sector subunit beta</fullName>
    </alternativeName>
    <alternativeName>
        <fullName evidence="1">F-ATPase subunit beta</fullName>
    </alternativeName>
</protein>
<sequence length="467" mass="50521">MATGKIVQIIGAVVDVEFPQSEVPSVYDALNVVDSKERLVLEVQQQLGGGVIRAIVMGSSDGLRRGMTVQNTGAPISVPVGTKTLGRIMNVLGDAIDERGDIGAEEVYSIHRPAPSYEEQSSATELLETGVKVIDLICPFAKGGKIGLFGGAGVGKTVNMMELINNIALQHSGLSVFAGVGERTREGNDFYHEMQEAGVVNVEQPELSKVAMVYGQMNEPPGNRLRVALTGLTMAEKFRDEGRDVLLFIDNIYRYTLAGTEVSALLGRMPSAVGYQPTLAEEMGVLQERITSTKKGSITSVQAVYVPADDLTDPSPATTFAHLDATVVLNRNIAAMGLYPAIDPLDSTSRQLDPLVVGQEHYDVARGVQATLQRYKELKDIIAILGMDELSEADKQVVARARKIERFLTQPYHVAEVFTGDPGVYVPLKETLRGFKGLLAGDYDDIPEQAFMYCGTIDDAIENAKKL</sequence>
<comment type="function">
    <text evidence="1">Produces ATP from ADP in the presence of a proton gradient across the membrane. The catalytic sites are hosted primarily by the beta subunits.</text>
</comment>
<comment type="catalytic activity">
    <reaction evidence="1">
        <text>ATP + H2O + 4 H(+)(in) = ADP + phosphate + 5 H(+)(out)</text>
        <dbReference type="Rhea" id="RHEA:57720"/>
        <dbReference type="ChEBI" id="CHEBI:15377"/>
        <dbReference type="ChEBI" id="CHEBI:15378"/>
        <dbReference type="ChEBI" id="CHEBI:30616"/>
        <dbReference type="ChEBI" id="CHEBI:43474"/>
        <dbReference type="ChEBI" id="CHEBI:456216"/>
        <dbReference type="EC" id="7.1.2.2"/>
    </reaction>
</comment>
<comment type="subunit">
    <text evidence="1">F-type ATPases have 2 components, CF(1) - the catalytic core - and CF(0) - the membrane proton channel. CF(1) has five subunits: alpha(3), beta(3), gamma(1), delta(1), epsilon(1). CF(0) has three main subunits: a(1), b(2) and c(9-12). The alpha and beta chains form an alternating ring which encloses part of the gamma chain. CF(1) is attached to CF(0) by a central stalk formed by the gamma and epsilon chains, while a peripheral stalk is formed by the delta and b chains.</text>
</comment>
<comment type="subcellular location">
    <subcellularLocation>
        <location evidence="1">Cell inner membrane</location>
        <topology evidence="1">Peripheral membrane protein</topology>
    </subcellularLocation>
</comment>
<comment type="similarity">
    <text evidence="1">Belongs to the ATPase alpha/beta chains family.</text>
</comment>
<organism>
    <name type="scientific">Vibrio cholerae serotype O1 (strain ATCC 39541 / Classical Ogawa 395 / O395)</name>
    <dbReference type="NCBI Taxonomy" id="345073"/>
    <lineage>
        <taxon>Bacteria</taxon>
        <taxon>Pseudomonadati</taxon>
        <taxon>Pseudomonadota</taxon>
        <taxon>Gammaproteobacteria</taxon>
        <taxon>Vibrionales</taxon>
        <taxon>Vibrionaceae</taxon>
        <taxon>Vibrio</taxon>
    </lineage>
</organism>
<gene>
    <name evidence="1" type="primary">atpD</name>
    <name type="ordered locus">VC0395_A2528</name>
    <name type="ordered locus">VC395_0191</name>
</gene>
<feature type="chain" id="PRO_1000073371" description="ATP synthase subunit beta">
    <location>
        <begin position="1"/>
        <end position="467"/>
    </location>
</feature>
<feature type="binding site" evidence="1">
    <location>
        <begin position="150"/>
        <end position="157"/>
    </location>
    <ligand>
        <name>ATP</name>
        <dbReference type="ChEBI" id="CHEBI:30616"/>
    </ligand>
</feature>
<name>ATPB_VIBC3</name>
<dbReference type="EC" id="7.1.2.2" evidence="1"/>
<dbReference type="EMBL" id="CP000627">
    <property type="protein sequence ID" value="ABQ20910.1"/>
    <property type="molecule type" value="Genomic_DNA"/>
</dbReference>
<dbReference type="EMBL" id="CP001235">
    <property type="protein sequence ID" value="ACP08218.1"/>
    <property type="molecule type" value="Genomic_DNA"/>
</dbReference>
<dbReference type="RefSeq" id="WP_000190491.1">
    <property type="nucleotide sequence ID" value="NZ_JAACZH010000018.1"/>
</dbReference>
<dbReference type="SMR" id="A5F459"/>
<dbReference type="GeneID" id="69721148"/>
<dbReference type="KEGG" id="vco:VC0395_A2528"/>
<dbReference type="KEGG" id="vcr:VC395_0191"/>
<dbReference type="PATRIC" id="fig|345073.21.peg.180"/>
<dbReference type="eggNOG" id="COG0055">
    <property type="taxonomic scope" value="Bacteria"/>
</dbReference>
<dbReference type="HOGENOM" id="CLU_022398_0_2_6"/>
<dbReference type="OrthoDB" id="9801639at2"/>
<dbReference type="Proteomes" id="UP000000249">
    <property type="component" value="Chromosome 2"/>
</dbReference>
<dbReference type="GO" id="GO:0005886">
    <property type="term" value="C:plasma membrane"/>
    <property type="evidence" value="ECO:0007669"/>
    <property type="project" value="UniProtKB-SubCell"/>
</dbReference>
<dbReference type="GO" id="GO:0045259">
    <property type="term" value="C:proton-transporting ATP synthase complex"/>
    <property type="evidence" value="ECO:0007669"/>
    <property type="project" value="UniProtKB-KW"/>
</dbReference>
<dbReference type="GO" id="GO:0005524">
    <property type="term" value="F:ATP binding"/>
    <property type="evidence" value="ECO:0007669"/>
    <property type="project" value="UniProtKB-UniRule"/>
</dbReference>
<dbReference type="GO" id="GO:0016887">
    <property type="term" value="F:ATP hydrolysis activity"/>
    <property type="evidence" value="ECO:0007669"/>
    <property type="project" value="InterPro"/>
</dbReference>
<dbReference type="GO" id="GO:0046933">
    <property type="term" value="F:proton-transporting ATP synthase activity, rotational mechanism"/>
    <property type="evidence" value="ECO:0007669"/>
    <property type="project" value="UniProtKB-UniRule"/>
</dbReference>
<dbReference type="CDD" id="cd18110">
    <property type="entry name" value="ATP-synt_F1_beta_C"/>
    <property type="match status" value="1"/>
</dbReference>
<dbReference type="CDD" id="cd18115">
    <property type="entry name" value="ATP-synt_F1_beta_N"/>
    <property type="match status" value="1"/>
</dbReference>
<dbReference type="CDD" id="cd01133">
    <property type="entry name" value="F1-ATPase_beta_CD"/>
    <property type="match status" value="1"/>
</dbReference>
<dbReference type="FunFam" id="1.10.1140.10:FF:000001">
    <property type="entry name" value="ATP synthase subunit beta"/>
    <property type="match status" value="1"/>
</dbReference>
<dbReference type="FunFam" id="2.40.10.170:FF:000003">
    <property type="entry name" value="ATP synthase subunit beta"/>
    <property type="match status" value="1"/>
</dbReference>
<dbReference type="FunFam" id="3.40.50.300:FF:000004">
    <property type="entry name" value="ATP synthase subunit beta"/>
    <property type="match status" value="1"/>
</dbReference>
<dbReference type="Gene3D" id="2.40.10.170">
    <property type="match status" value="1"/>
</dbReference>
<dbReference type="Gene3D" id="1.10.1140.10">
    <property type="entry name" value="Bovine Mitochondrial F1-atpase, Atp Synthase Beta Chain, Chain D, domain 3"/>
    <property type="match status" value="1"/>
</dbReference>
<dbReference type="Gene3D" id="3.40.50.300">
    <property type="entry name" value="P-loop containing nucleotide triphosphate hydrolases"/>
    <property type="match status" value="1"/>
</dbReference>
<dbReference type="HAMAP" id="MF_01347">
    <property type="entry name" value="ATP_synth_beta_bact"/>
    <property type="match status" value="1"/>
</dbReference>
<dbReference type="InterPro" id="IPR003593">
    <property type="entry name" value="AAA+_ATPase"/>
</dbReference>
<dbReference type="InterPro" id="IPR055190">
    <property type="entry name" value="ATP-synt_VA_C"/>
</dbReference>
<dbReference type="InterPro" id="IPR005722">
    <property type="entry name" value="ATP_synth_F1_bsu"/>
</dbReference>
<dbReference type="InterPro" id="IPR020003">
    <property type="entry name" value="ATPase_a/bsu_AS"/>
</dbReference>
<dbReference type="InterPro" id="IPR050053">
    <property type="entry name" value="ATPase_alpha/beta_chains"/>
</dbReference>
<dbReference type="InterPro" id="IPR004100">
    <property type="entry name" value="ATPase_F1/V1/A1_a/bsu_N"/>
</dbReference>
<dbReference type="InterPro" id="IPR036121">
    <property type="entry name" value="ATPase_F1/V1/A1_a/bsu_N_sf"/>
</dbReference>
<dbReference type="InterPro" id="IPR000194">
    <property type="entry name" value="ATPase_F1/V1/A1_a/bsu_nucl-bd"/>
</dbReference>
<dbReference type="InterPro" id="IPR024034">
    <property type="entry name" value="ATPase_F1/V1_b/a_C"/>
</dbReference>
<dbReference type="InterPro" id="IPR027417">
    <property type="entry name" value="P-loop_NTPase"/>
</dbReference>
<dbReference type="NCBIfam" id="TIGR01039">
    <property type="entry name" value="atpD"/>
    <property type="match status" value="1"/>
</dbReference>
<dbReference type="PANTHER" id="PTHR15184">
    <property type="entry name" value="ATP SYNTHASE"/>
    <property type="match status" value="1"/>
</dbReference>
<dbReference type="PANTHER" id="PTHR15184:SF71">
    <property type="entry name" value="ATP SYNTHASE SUBUNIT BETA, MITOCHONDRIAL"/>
    <property type="match status" value="1"/>
</dbReference>
<dbReference type="Pfam" id="PF00006">
    <property type="entry name" value="ATP-synt_ab"/>
    <property type="match status" value="1"/>
</dbReference>
<dbReference type="Pfam" id="PF02874">
    <property type="entry name" value="ATP-synt_ab_N"/>
    <property type="match status" value="1"/>
</dbReference>
<dbReference type="Pfam" id="PF22919">
    <property type="entry name" value="ATP-synt_VA_C"/>
    <property type="match status" value="1"/>
</dbReference>
<dbReference type="SMART" id="SM00382">
    <property type="entry name" value="AAA"/>
    <property type="match status" value="1"/>
</dbReference>
<dbReference type="SUPFAM" id="SSF47917">
    <property type="entry name" value="C-terminal domain of alpha and beta subunits of F1 ATP synthase"/>
    <property type="match status" value="1"/>
</dbReference>
<dbReference type="SUPFAM" id="SSF50615">
    <property type="entry name" value="N-terminal domain of alpha and beta subunits of F1 ATP synthase"/>
    <property type="match status" value="1"/>
</dbReference>
<dbReference type="SUPFAM" id="SSF52540">
    <property type="entry name" value="P-loop containing nucleoside triphosphate hydrolases"/>
    <property type="match status" value="1"/>
</dbReference>
<dbReference type="PROSITE" id="PS00152">
    <property type="entry name" value="ATPASE_ALPHA_BETA"/>
    <property type="match status" value="1"/>
</dbReference>
<proteinExistence type="inferred from homology"/>
<reference key="1">
    <citation type="submission" date="2007-03" db="EMBL/GenBank/DDBJ databases">
        <authorList>
            <person name="Heidelberg J."/>
        </authorList>
    </citation>
    <scope>NUCLEOTIDE SEQUENCE [LARGE SCALE GENOMIC DNA]</scope>
    <source>
        <strain>ATCC 39541 / Classical Ogawa 395 / O395</strain>
    </source>
</reference>
<reference key="2">
    <citation type="journal article" date="2008" name="PLoS ONE">
        <title>A recalibrated molecular clock and independent origins for the cholera pandemic clones.</title>
        <authorList>
            <person name="Feng L."/>
            <person name="Reeves P.R."/>
            <person name="Lan R."/>
            <person name="Ren Y."/>
            <person name="Gao C."/>
            <person name="Zhou Z."/>
            <person name="Ren Y."/>
            <person name="Cheng J."/>
            <person name="Wang W."/>
            <person name="Wang J."/>
            <person name="Qian W."/>
            <person name="Li D."/>
            <person name="Wang L."/>
        </authorList>
    </citation>
    <scope>NUCLEOTIDE SEQUENCE [LARGE SCALE GENOMIC DNA]</scope>
    <source>
        <strain>ATCC 39541 / Classical Ogawa 395 / O395</strain>
    </source>
</reference>
<accession>A5F459</accession>
<accession>C3M339</accession>
<evidence type="ECO:0000255" key="1">
    <source>
        <dbReference type="HAMAP-Rule" id="MF_01347"/>
    </source>
</evidence>